<organism>
    <name type="scientific">Staphylococcus aureus (strain NCTC 8325 / PS 47)</name>
    <dbReference type="NCBI Taxonomy" id="93061"/>
    <lineage>
        <taxon>Bacteria</taxon>
        <taxon>Bacillati</taxon>
        <taxon>Bacillota</taxon>
        <taxon>Bacilli</taxon>
        <taxon>Bacillales</taxon>
        <taxon>Staphylococcaceae</taxon>
        <taxon>Staphylococcus</taxon>
    </lineage>
</organism>
<reference key="1">
    <citation type="book" date="2006" name="Gram positive pathogens, 2nd edition">
        <title>The Staphylococcus aureus NCTC 8325 genome.</title>
        <editorList>
            <person name="Fischetti V."/>
            <person name="Novick R."/>
            <person name="Ferretti J."/>
            <person name="Portnoy D."/>
            <person name="Rood J."/>
        </editorList>
        <authorList>
            <person name="Gillaspy A.F."/>
            <person name="Worrell V."/>
            <person name="Orvis J."/>
            <person name="Roe B.A."/>
            <person name="Dyer D.W."/>
            <person name="Iandolo J.J."/>
        </authorList>
    </citation>
    <scope>NUCLEOTIDE SEQUENCE [LARGE SCALE GENOMIC DNA]</scope>
    <source>
        <strain>NCTC 8325 / PS 47</strain>
    </source>
</reference>
<sequence>MSQIEFKNVSKVYPNGHVGLKNINLNIEKGEFAVIVGLSGAGKSTLLRSVNRLHDITSGEIFIQGKSITKAHGKALLEMRRNIGMIFQHFNLVKRSSVLRNVLSGRVGYHPTWKMVLGLFPKEDKIKAMDALERVNILDKYNQRSDELSGGQQQRISIARALCQESEIILADEPVASLDPLTTKQVMDDLRKINQELGITILINLHFVDLAKEYGTRIIGLRDGEVVYDGPASEATDDVFSEIYGRTIKEDEKLGVN</sequence>
<keyword id="KW-0067">ATP-binding</keyword>
<keyword id="KW-1003">Cell membrane</keyword>
<keyword id="KW-0472">Membrane</keyword>
<keyword id="KW-0547">Nucleotide-binding</keyword>
<keyword id="KW-0918">Phosphonate transport</keyword>
<keyword id="KW-1185">Reference proteome</keyword>
<keyword id="KW-1278">Translocase</keyword>
<keyword id="KW-0813">Transport</keyword>
<dbReference type="EC" id="7.3.2.2" evidence="1"/>
<dbReference type="EMBL" id="CP000253">
    <property type="protein sequence ID" value="ABD29285.1"/>
    <property type="molecule type" value="Genomic_DNA"/>
</dbReference>
<dbReference type="RefSeq" id="WP_000078092.1">
    <property type="nucleotide sequence ID" value="NZ_LS483365.1"/>
</dbReference>
<dbReference type="RefSeq" id="YP_498704.1">
    <property type="nucleotide sequence ID" value="NC_007795.1"/>
</dbReference>
<dbReference type="SMR" id="Q2G1L8"/>
<dbReference type="STRING" id="93061.SAOUHSC_00104"/>
<dbReference type="PaxDb" id="1280-SAXN108_0128"/>
<dbReference type="GeneID" id="3919813"/>
<dbReference type="KEGG" id="sao:SAOUHSC_00104"/>
<dbReference type="PATRIC" id="fig|93061.5.peg.93"/>
<dbReference type="eggNOG" id="COG3638">
    <property type="taxonomic scope" value="Bacteria"/>
</dbReference>
<dbReference type="HOGENOM" id="CLU_000604_1_22_9"/>
<dbReference type="OrthoDB" id="9802264at2"/>
<dbReference type="PRO" id="PR:Q2G1L8"/>
<dbReference type="Proteomes" id="UP000008816">
    <property type="component" value="Chromosome"/>
</dbReference>
<dbReference type="GO" id="GO:0005886">
    <property type="term" value="C:plasma membrane"/>
    <property type="evidence" value="ECO:0007669"/>
    <property type="project" value="UniProtKB-SubCell"/>
</dbReference>
<dbReference type="GO" id="GO:0015416">
    <property type="term" value="F:ABC-type phosphonate transporter activity"/>
    <property type="evidence" value="ECO:0007669"/>
    <property type="project" value="UniProtKB-EC"/>
</dbReference>
<dbReference type="GO" id="GO:0005524">
    <property type="term" value="F:ATP binding"/>
    <property type="evidence" value="ECO:0007669"/>
    <property type="project" value="UniProtKB-KW"/>
</dbReference>
<dbReference type="GO" id="GO:0016887">
    <property type="term" value="F:ATP hydrolysis activity"/>
    <property type="evidence" value="ECO:0007669"/>
    <property type="project" value="InterPro"/>
</dbReference>
<dbReference type="CDD" id="cd03256">
    <property type="entry name" value="ABC_PhnC_transporter"/>
    <property type="match status" value="1"/>
</dbReference>
<dbReference type="Gene3D" id="3.40.50.300">
    <property type="entry name" value="P-loop containing nucleotide triphosphate hydrolases"/>
    <property type="match status" value="1"/>
</dbReference>
<dbReference type="InterPro" id="IPR003593">
    <property type="entry name" value="AAA+_ATPase"/>
</dbReference>
<dbReference type="InterPro" id="IPR003439">
    <property type="entry name" value="ABC_transporter-like_ATP-bd"/>
</dbReference>
<dbReference type="InterPro" id="IPR017871">
    <property type="entry name" value="ABC_transporter-like_CS"/>
</dbReference>
<dbReference type="InterPro" id="IPR012693">
    <property type="entry name" value="ABC_transpr_PhnC"/>
</dbReference>
<dbReference type="InterPro" id="IPR050086">
    <property type="entry name" value="MetN_ABC_transporter-like"/>
</dbReference>
<dbReference type="InterPro" id="IPR027417">
    <property type="entry name" value="P-loop_NTPase"/>
</dbReference>
<dbReference type="NCBIfam" id="TIGR02315">
    <property type="entry name" value="ABC_phnC"/>
    <property type="match status" value="1"/>
</dbReference>
<dbReference type="PANTHER" id="PTHR43166">
    <property type="entry name" value="AMINO ACID IMPORT ATP-BINDING PROTEIN"/>
    <property type="match status" value="1"/>
</dbReference>
<dbReference type="PANTHER" id="PTHR43166:SF6">
    <property type="entry name" value="PHOSPHONATES IMPORT ATP-BINDING PROTEIN PHNC"/>
    <property type="match status" value="1"/>
</dbReference>
<dbReference type="Pfam" id="PF00005">
    <property type="entry name" value="ABC_tran"/>
    <property type="match status" value="1"/>
</dbReference>
<dbReference type="SMART" id="SM00382">
    <property type="entry name" value="AAA"/>
    <property type="match status" value="1"/>
</dbReference>
<dbReference type="SUPFAM" id="SSF52540">
    <property type="entry name" value="P-loop containing nucleoside triphosphate hydrolases"/>
    <property type="match status" value="1"/>
</dbReference>
<dbReference type="PROSITE" id="PS00211">
    <property type="entry name" value="ABC_TRANSPORTER_1"/>
    <property type="match status" value="1"/>
</dbReference>
<dbReference type="PROSITE" id="PS50893">
    <property type="entry name" value="ABC_TRANSPORTER_2"/>
    <property type="match status" value="1"/>
</dbReference>
<dbReference type="PROSITE" id="PS51249">
    <property type="entry name" value="PHNC"/>
    <property type="match status" value="1"/>
</dbReference>
<gene>
    <name evidence="1" type="primary">phnC</name>
    <name type="ordered locus">SAOUHSC_00104</name>
</gene>
<name>PHNC_STAA8</name>
<proteinExistence type="inferred from homology"/>
<accession>Q2G1L8</accession>
<comment type="function">
    <text evidence="1">Part of the ABC transporter complex PhnCDE involved in phosphonates import. Responsible for energy coupling to the transport system.</text>
</comment>
<comment type="catalytic activity">
    <reaction evidence="1">
        <text>phosphonate(out) + ATP + H2O = phosphonate(in) + ADP + phosphate + H(+)</text>
        <dbReference type="Rhea" id="RHEA:18065"/>
        <dbReference type="ChEBI" id="CHEBI:15377"/>
        <dbReference type="ChEBI" id="CHEBI:15378"/>
        <dbReference type="ChEBI" id="CHEBI:16215"/>
        <dbReference type="ChEBI" id="CHEBI:30616"/>
        <dbReference type="ChEBI" id="CHEBI:43474"/>
        <dbReference type="ChEBI" id="CHEBI:456216"/>
        <dbReference type="EC" id="7.3.2.2"/>
    </reaction>
</comment>
<comment type="subunit">
    <text evidence="1">The complex is composed of two ATP-binding proteins (PhnC), two transmembrane proteins (PhnE) and a solute-binding protein (PhnD).</text>
</comment>
<comment type="subcellular location">
    <subcellularLocation>
        <location evidence="1">Cell membrane</location>
        <topology evidence="1">Peripheral membrane protein</topology>
    </subcellularLocation>
</comment>
<comment type="similarity">
    <text evidence="1">Belongs to the ABC transporter superfamily. Phosphonates importer (TC 3.A.1.9.1) family.</text>
</comment>
<protein>
    <recommendedName>
        <fullName evidence="1">Phosphonates import ATP-binding protein PhnC</fullName>
        <ecNumber evidence="1">7.3.2.2</ecNumber>
    </recommendedName>
</protein>
<evidence type="ECO:0000255" key="1">
    <source>
        <dbReference type="HAMAP-Rule" id="MF_01713"/>
    </source>
</evidence>
<feature type="chain" id="PRO_0000274758" description="Phosphonates import ATP-binding protein PhnC">
    <location>
        <begin position="1"/>
        <end position="257"/>
    </location>
</feature>
<feature type="domain" description="ABC transporter" evidence="1">
    <location>
        <begin position="4"/>
        <end position="248"/>
    </location>
</feature>
<feature type="binding site" evidence="1">
    <location>
        <begin position="37"/>
        <end position="44"/>
    </location>
    <ligand>
        <name>ATP</name>
        <dbReference type="ChEBI" id="CHEBI:30616"/>
    </ligand>
</feature>